<accession>P31908</accession>
<keyword id="KW-0010">Activator</keyword>
<keyword id="KW-0067">ATP-binding</keyword>
<keyword id="KW-0963">Cytoplasm</keyword>
<keyword id="KW-0238">DNA-binding</keyword>
<keyword id="KW-0547">Nucleotide-binding</keyword>
<keyword id="KW-0597">Phosphoprotein</keyword>
<keyword id="KW-1185">Reference proteome</keyword>
<keyword id="KW-0804">Transcription</keyword>
<keyword id="KW-0805">Transcription regulation</keyword>
<keyword id="KW-0902">Two-component regulatory system</keyword>
<proteinExistence type="inferred from homology"/>
<gene>
    <name type="primary">hoxA</name>
    <name type="ordered locus">bll6925</name>
</gene>
<comment type="function">
    <text>Probable member of the two-component regulatory system involved in the regulation of the hydrogenase activity. HoxA is probably phosphorylated by a sensory component (which could be HoxX) and then acts in conjunction with sigma-54 as a transcriptional activator.</text>
</comment>
<comment type="subcellular location">
    <subcellularLocation>
        <location evidence="5">Cytoplasm</location>
    </subcellularLocation>
</comment>
<comment type="sequence caution" evidence="5">
    <conflict type="frameshift">
        <sequence resource="EMBL-CDS" id="CAA78991"/>
    </conflict>
</comment>
<dbReference type="EMBL" id="Z17373">
    <property type="protein sequence ID" value="CAA78991.1"/>
    <property type="status" value="ALT_FRAME"/>
    <property type="molecule type" value="Genomic_DNA"/>
</dbReference>
<dbReference type="EMBL" id="BA000040">
    <property type="protein sequence ID" value="BAC52190.1"/>
    <property type="molecule type" value="Genomic_DNA"/>
</dbReference>
<dbReference type="PIR" id="S35232">
    <property type="entry name" value="S35232"/>
</dbReference>
<dbReference type="RefSeq" id="NP_773565.1">
    <property type="nucleotide sequence ID" value="NC_004463.1"/>
</dbReference>
<dbReference type="RefSeq" id="WP_011089663.1">
    <property type="nucleotide sequence ID" value="NC_004463.1"/>
</dbReference>
<dbReference type="SMR" id="P31908"/>
<dbReference type="STRING" id="224911.AAV28_32215"/>
<dbReference type="EnsemblBacteria" id="BAC52190">
    <property type="protein sequence ID" value="BAC52190"/>
    <property type="gene ID" value="BAC52190"/>
</dbReference>
<dbReference type="GeneID" id="46493891"/>
<dbReference type="KEGG" id="bja:bll6925"/>
<dbReference type="PATRIC" id="fig|224911.44.peg.6959"/>
<dbReference type="eggNOG" id="COG2204">
    <property type="taxonomic scope" value="Bacteria"/>
</dbReference>
<dbReference type="HOGENOM" id="CLU_000445_0_6_5"/>
<dbReference type="InParanoid" id="P31908"/>
<dbReference type="OrthoDB" id="9762726at2"/>
<dbReference type="PhylomeDB" id="P31908"/>
<dbReference type="Proteomes" id="UP000002526">
    <property type="component" value="Chromosome"/>
</dbReference>
<dbReference type="GO" id="GO:0005737">
    <property type="term" value="C:cytoplasm"/>
    <property type="evidence" value="ECO:0007669"/>
    <property type="project" value="UniProtKB-SubCell"/>
</dbReference>
<dbReference type="GO" id="GO:0032993">
    <property type="term" value="C:protein-DNA complex"/>
    <property type="evidence" value="ECO:0000318"/>
    <property type="project" value="GO_Central"/>
</dbReference>
<dbReference type="GO" id="GO:0005524">
    <property type="term" value="F:ATP binding"/>
    <property type="evidence" value="ECO:0007669"/>
    <property type="project" value="UniProtKB-KW"/>
</dbReference>
<dbReference type="GO" id="GO:0016887">
    <property type="term" value="F:ATP hydrolysis activity"/>
    <property type="evidence" value="ECO:0007669"/>
    <property type="project" value="InterPro"/>
</dbReference>
<dbReference type="GO" id="GO:0000987">
    <property type="term" value="F:cis-regulatory region sequence-specific DNA binding"/>
    <property type="evidence" value="ECO:0000318"/>
    <property type="project" value="GO_Central"/>
</dbReference>
<dbReference type="GO" id="GO:0001216">
    <property type="term" value="F:DNA-binding transcription activator activity"/>
    <property type="evidence" value="ECO:0000318"/>
    <property type="project" value="GO_Central"/>
</dbReference>
<dbReference type="GO" id="GO:0000160">
    <property type="term" value="P:phosphorelay signal transduction system"/>
    <property type="evidence" value="ECO:0007669"/>
    <property type="project" value="UniProtKB-KW"/>
</dbReference>
<dbReference type="GO" id="GO:0045893">
    <property type="term" value="P:positive regulation of DNA-templated transcription"/>
    <property type="evidence" value="ECO:0000318"/>
    <property type="project" value="GO_Central"/>
</dbReference>
<dbReference type="CDD" id="cd00009">
    <property type="entry name" value="AAA"/>
    <property type="match status" value="1"/>
</dbReference>
<dbReference type="CDD" id="cd17596">
    <property type="entry name" value="REC_HupR"/>
    <property type="match status" value="1"/>
</dbReference>
<dbReference type="FunFam" id="3.40.50.300:FF:000006">
    <property type="entry name" value="DNA-binding transcriptional regulator NtrC"/>
    <property type="match status" value="1"/>
</dbReference>
<dbReference type="Gene3D" id="1.10.8.60">
    <property type="match status" value="1"/>
</dbReference>
<dbReference type="Gene3D" id="3.40.50.2300">
    <property type="match status" value="1"/>
</dbReference>
<dbReference type="Gene3D" id="1.10.10.60">
    <property type="entry name" value="Homeodomain-like"/>
    <property type="match status" value="1"/>
</dbReference>
<dbReference type="Gene3D" id="3.40.50.300">
    <property type="entry name" value="P-loop containing nucleotide triphosphate hydrolases"/>
    <property type="match status" value="1"/>
</dbReference>
<dbReference type="InterPro" id="IPR003593">
    <property type="entry name" value="AAA+_ATPase"/>
</dbReference>
<dbReference type="InterPro" id="IPR011006">
    <property type="entry name" value="CheY-like_superfamily"/>
</dbReference>
<dbReference type="InterPro" id="IPR009057">
    <property type="entry name" value="Homeodomain-like_sf"/>
</dbReference>
<dbReference type="InterPro" id="IPR002197">
    <property type="entry name" value="HTH_Fis"/>
</dbReference>
<dbReference type="InterPro" id="IPR027417">
    <property type="entry name" value="P-loop_NTPase"/>
</dbReference>
<dbReference type="InterPro" id="IPR001789">
    <property type="entry name" value="Sig_transdc_resp-reg_receiver"/>
</dbReference>
<dbReference type="InterPro" id="IPR002078">
    <property type="entry name" value="Sigma_54_int"/>
</dbReference>
<dbReference type="InterPro" id="IPR025662">
    <property type="entry name" value="Sigma_54_int_dom_ATP-bd_1"/>
</dbReference>
<dbReference type="InterPro" id="IPR025943">
    <property type="entry name" value="Sigma_54_int_dom_ATP-bd_2"/>
</dbReference>
<dbReference type="InterPro" id="IPR025944">
    <property type="entry name" value="Sigma_54_int_dom_CS"/>
</dbReference>
<dbReference type="PANTHER" id="PTHR32071:SF117">
    <property type="entry name" value="PTS-DEPENDENT DIHYDROXYACETONE KINASE OPERON REGULATORY PROTEIN-RELATED"/>
    <property type="match status" value="1"/>
</dbReference>
<dbReference type="PANTHER" id="PTHR32071">
    <property type="entry name" value="TRANSCRIPTIONAL REGULATORY PROTEIN"/>
    <property type="match status" value="1"/>
</dbReference>
<dbReference type="Pfam" id="PF02954">
    <property type="entry name" value="HTH_8"/>
    <property type="match status" value="1"/>
</dbReference>
<dbReference type="Pfam" id="PF00072">
    <property type="entry name" value="Response_reg"/>
    <property type="match status" value="1"/>
</dbReference>
<dbReference type="Pfam" id="PF00158">
    <property type="entry name" value="Sigma54_activat"/>
    <property type="match status" value="1"/>
</dbReference>
<dbReference type="PRINTS" id="PR01590">
    <property type="entry name" value="HTHFIS"/>
</dbReference>
<dbReference type="SMART" id="SM00382">
    <property type="entry name" value="AAA"/>
    <property type="match status" value="1"/>
</dbReference>
<dbReference type="SMART" id="SM00448">
    <property type="entry name" value="REC"/>
    <property type="match status" value="1"/>
</dbReference>
<dbReference type="SUPFAM" id="SSF52172">
    <property type="entry name" value="CheY-like"/>
    <property type="match status" value="1"/>
</dbReference>
<dbReference type="SUPFAM" id="SSF46689">
    <property type="entry name" value="Homeodomain-like"/>
    <property type="match status" value="1"/>
</dbReference>
<dbReference type="SUPFAM" id="SSF52540">
    <property type="entry name" value="P-loop containing nucleoside triphosphate hydrolases"/>
    <property type="match status" value="1"/>
</dbReference>
<dbReference type="PROSITE" id="PS50110">
    <property type="entry name" value="RESPONSE_REGULATORY"/>
    <property type="match status" value="1"/>
</dbReference>
<dbReference type="PROSITE" id="PS00675">
    <property type="entry name" value="SIGMA54_INTERACT_1"/>
    <property type="match status" value="1"/>
</dbReference>
<dbReference type="PROSITE" id="PS00676">
    <property type="entry name" value="SIGMA54_INTERACT_2"/>
    <property type="match status" value="1"/>
</dbReference>
<dbReference type="PROSITE" id="PS00688">
    <property type="entry name" value="SIGMA54_INTERACT_3"/>
    <property type="match status" value="1"/>
</dbReference>
<dbReference type="PROSITE" id="PS50045">
    <property type="entry name" value="SIGMA54_INTERACT_4"/>
    <property type="match status" value="1"/>
</dbReference>
<organism>
    <name type="scientific">Bradyrhizobium diazoefficiens (strain JCM 10833 / BCRC 13528 / IAM 13628 / NBRC 14792 / USDA 110)</name>
    <dbReference type="NCBI Taxonomy" id="224911"/>
    <lineage>
        <taxon>Bacteria</taxon>
        <taxon>Pseudomonadati</taxon>
        <taxon>Pseudomonadota</taxon>
        <taxon>Alphaproteobacteria</taxon>
        <taxon>Hyphomicrobiales</taxon>
        <taxon>Nitrobacteraceae</taxon>
        <taxon>Bradyrhizobium</taxon>
    </lineage>
</organism>
<protein>
    <recommendedName>
        <fullName>Hydrogenase transcriptional regulatory protein HoxA</fullName>
    </recommendedName>
</protein>
<name>HOXA_BRADU</name>
<evidence type="ECO:0000250" key="1"/>
<evidence type="ECO:0000255" key="2">
    <source>
        <dbReference type="PROSITE-ProRule" id="PRU00169"/>
    </source>
</evidence>
<evidence type="ECO:0000255" key="3">
    <source>
        <dbReference type="PROSITE-ProRule" id="PRU00193"/>
    </source>
</evidence>
<evidence type="ECO:0000256" key="4">
    <source>
        <dbReference type="SAM" id="MobiDB-lite"/>
    </source>
</evidence>
<evidence type="ECO:0000305" key="5"/>
<sequence length="485" mass="54058">MSIQGTILVVDDEVRSQEALRRVLREDFEVLCVGNATDAEKLLEGEIVHAILCDQRMPHESGVSFLKRVRELWPDPVRMIISGYSESEDIIAGLNEAGIYQYITKPWQPDQLVETVKEAVQLYRLQKETETAGVDVKATSGHIKKVVSVKRGVAKQLYDFDRIVHSTESPMHAVIELGRRAADYDISVLITGESGTGKELLARAIHYGSARANRAFVVENCGALPDELLESELFGCKKGAFTGAYQDRIGLFEVADGGTIFLDEIGETSPAFQVKLLRVLQESEIRPLGAQRVRKVDVRVVAATNRDLEAEVEAGRFRRDLYYRLAAFPVHMPALRERPMDIPLIAEGVLSAVKSSFNRPNLRFARSALEEFGKYHWPGNVRELQNEIQRMAVLADRDELAAPPLLGRRNGKRSAPLPAHGRLNGSASLKDKVEDLEKSVIMNCLERNDGNISRVASELGLSRVGLRNKLSRYDLRKNAKGDAFS</sequence>
<reference key="1">
    <citation type="journal article" date="1993" name="Mol. Gen. Genet.">
        <title>Identification of a potential transcriptional regulator of hydrogenase activity in free-living Bradyrhizobium japonicum strains.</title>
        <authorList>
            <person name="van Soom C."/>
            <person name="Verreth C."/>
            <person name="Sampaio M.J."/>
            <person name="Vanderleyden J."/>
        </authorList>
    </citation>
    <scope>NUCLEOTIDE SEQUENCE [GENOMIC DNA]</scope>
    <source>
        <strain>CB1809</strain>
    </source>
</reference>
<reference key="2">
    <citation type="journal article" date="2002" name="DNA Res.">
        <title>Complete genomic sequence of nitrogen-fixing symbiotic bacterium Bradyrhizobium japonicum USDA110.</title>
        <authorList>
            <person name="Kaneko T."/>
            <person name="Nakamura Y."/>
            <person name="Sato S."/>
            <person name="Minamisawa K."/>
            <person name="Uchiumi T."/>
            <person name="Sasamoto S."/>
            <person name="Watanabe A."/>
            <person name="Idesawa K."/>
            <person name="Iriguchi M."/>
            <person name="Kawashima K."/>
            <person name="Kohara M."/>
            <person name="Matsumoto M."/>
            <person name="Shimpo S."/>
            <person name="Tsuruoka H."/>
            <person name="Wada T."/>
            <person name="Yamada M."/>
            <person name="Tabata S."/>
        </authorList>
    </citation>
    <scope>NUCLEOTIDE SEQUENCE [LARGE SCALE GENOMIC DNA]</scope>
    <source>
        <strain>JCM 10833 / BCRC 13528 / IAM 13628 / NBRC 14792 / USDA 110</strain>
    </source>
</reference>
<feature type="chain" id="PRO_0000081110" description="Hydrogenase transcriptional regulatory protein HoxA">
    <location>
        <begin position="1"/>
        <end position="485"/>
    </location>
</feature>
<feature type="domain" description="Response regulatory" evidence="2">
    <location>
        <begin position="6"/>
        <end position="120"/>
    </location>
</feature>
<feature type="domain" description="Sigma-54 factor interaction" evidence="3">
    <location>
        <begin position="166"/>
        <end position="392"/>
    </location>
</feature>
<feature type="DNA-binding region" description="H-T-H motif" evidence="1">
    <location>
        <begin position="451"/>
        <end position="470"/>
    </location>
</feature>
<feature type="region of interest" description="Disordered" evidence="4">
    <location>
        <begin position="404"/>
        <end position="426"/>
    </location>
</feature>
<feature type="binding site" evidence="3">
    <location>
        <begin position="192"/>
        <end position="199"/>
    </location>
    <ligand>
        <name>ATP</name>
        <dbReference type="ChEBI" id="CHEBI:30616"/>
    </ligand>
</feature>
<feature type="binding site" evidence="3">
    <location>
        <begin position="264"/>
        <end position="273"/>
    </location>
    <ligand>
        <name>ATP</name>
        <dbReference type="ChEBI" id="CHEBI:30616"/>
    </ligand>
</feature>
<feature type="modified residue" description="4-aspartylphosphate" evidence="2">
    <location>
        <position position="54"/>
    </location>
</feature>
<feature type="sequence conflict" description="In Ref. 1; CAA78991." evidence="5" ref="1">
    <original>QRV</original>
    <variation>ARC</variation>
    <location>
        <begin position="291"/>
        <end position="293"/>
    </location>
</feature>